<accession>Q63531</accession>
<protein>
    <recommendedName>
        <fullName>Ribosomal protein S6 kinase alpha-1</fullName>
        <shortName>S6K-alpha-1</shortName>
        <ecNumber>2.7.11.1</ecNumber>
    </recommendedName>
    <alternativeName>
        <fullName>90 kDa ribosomal protein S6 kinase 1</fullName>
        <shortName>p90-RSK 1</shortName>
        <shortName>p90RSK1</shortName>
        <shortName>p90S6K</shortName>
    </alternativeName>
    <alternativeName>
        <fullName>MAP kinase-activated protein kinase 1a</fullName>
        <shortName>MAPK-activated protein kinase 1a</shortName>
        <shortName>MAPKAP kinase 1a</shortName>
        <shortName>MAPKAPK-1a</shortName>
    </alternativeName>
    <alternativeName>
        <fullName>Ribosomal S6 kinase 1</fullName>
        <shortName>RSK-1</shortName>
    </alternativeName>
</protein>
<evidence type="ECO:0000250" key="1"/>
<evidence type="ECO:0000250" key="2">
    <source>
        <dbReference type="UniProtKB" id="Q15418"/>
    </source>
</evidence>
<evidence type="ECO:0000255" key="3">
    <source>
        <dbReference type="PROSITE-ProRule" id="PRU00159"/>
    </source>
</evidence>
<evidence type="ECO:0000255" key="4">
    <source>
        <dbReference type="PROSITE-ProRule" id="PRU00618"/>
    </source>
</evidence>
<evidence type="ECO:0000269" key="5">
    <source>
    </source>
</evidence>
<evidence type="ECO:0000269" key="6">
    <source>
    </source>
</evidence>
<evidence type="ECO:0000269" key="7">
    <source>
    </source>
</evidence>
<evidence type="ECO:0000305" key="8"/>
<keyword id="KW-0067">ATP-binding</keyword>
<keyword id="KW-0963">Cytoplasm</keyword>
<keyword id="KW-0418">Kinase</keyword>
<keyword id="KW-0547">Nucleotide-binding</keyword>
<keyword id="KW-0539">Nucleus</keyword>
<keyword id="KW-0597">Phosphoprotein</keyword>
<keyword id="KW-1185">Reference proteome</keyword>
<keyword id="KW-0677">Repeat</keyword>
<keyword id="KW-0723">Serine/threonine-protein kinase</keyword>
<keyword id="KW-0808">Transferase</keyword>
<comment type="function">
    <text evidence="2 6 7">Serine/threonine-protein kinase that acts downstream of ERK (MAPK1/ERK2 and MAPK3/ERK1) signaling and mediates mitogenic and stress-induced activation of the transcription factors CREB1, ETV1/ER81 and NR4A1/NUR77, regulates translation through RPS6 and EIF4B phosphorylation, and mediates cellular proliferation, survival, and differentiation by modulating mTOR signaling and repressing pro-apoptotic function of BAD and DAPK1 (By similarity). In fibroblast, is required for EGF-stimulated phosphorylation of CREB1, which results in the subsequent transcriptional activation of several immediate-early genes (PubMed:15117958). In response to mitogenic stimulation (EGF and PMA), phosphorylates and activates NR4A1/NUR77 and ETV1/ER81 transcription factors and the cofactor CREBBP (By similarity). Upon insulin-derived signal, acts indirectly on the transcription regulation of several genes by phosphorylating GSK3B at 'Ser-9' and inhibiting its activity (By similarity). Phosphorylates RPS6 in response to serum or EGF via an mTOR-independent mechanism and promotes translation initiation by facilitating assembly of the pre-initiation complex (By similarity). In response to insulin, phosphorylates EIF4B, enhancing EIF4B affinity for the EIF3 complex and stimulating cap-dependent translation (By similarity). Is involved in the mTOR nutrient-sensing pathway by directly phosphorylating TSC2 at 'Ser-1798', which potently inhibits TSC2 ability to suppress mTOR signaling, and mediates phosphorylation of RPTOR, which regulates mTORC1 activity and may promote rapamycin-sensitive signaling independently of the PI3K/AKT pathway (By similarity). Also involved in feedback regulation of mTORC1 and mTORC2 by phosphorylating DEPTOR (By similarity). Mediates cell survival by phosphorylating the pro-apoptotic proteins BAD and DAPK1 and suppressing their pro-apoptotic function (By similarity). Promotes the survival of hepatic stellate cells by phosphorylating CEBPB in response to the hepatotoxin carbon tetrachloride (CCl4) (By similarity). Mediates induction of hepatocyte prolifration by TGFA through phosphorylation of CEBPB (By similarity). Is involved in cell cycle regulation by phosphorylating the CDK inhibitor CDKN1B, which promotes CDKN1B association with 14-3-3 proteins and prevents its translocation to the nucleus and inhibition of G1 progression (PubMed:14504289). Phosphorylates EPHA2 at 'Ser-897', the RPS6KA-EPHA2 signaling pathway controls cell migration (By similarity). In response to mTORC1 activation, phosphorylates EIF4B at 'Ser-406' and 'Ser-422' which stimulates bicarbonate cotransporter SLC4A7 mRNA translation, increasing SLC4A7 protein abundance and function (By similarity).</text>
</comment>
<comment type="catalytic activity">
    <reaction>
        <text>L-seryl-[protein] + ATP = O-phospho-L-seryl-[protein] + ADP + H(+)</text>
        <dbReference type="Rhea" id="RHEA:17989"/>
        <dbReference type="Rhea" id="RHEA-COMP:9863"/>
        <dbReference type="Rhea" id="RHEA-COMP:11604"/>
        <dbReference type="ChEBI" id="CHEBI:15378"/>
        <dbReference type="ChEBI" id="CHEBI:29999"/>
        <dbReference type="ChEBI" id="CHEBI:30616"/>
        <dbReference type="ChEBI" id="CHEBI:83421"/>
        <dbReference type="ChEBI" id="CHEBI:456216"/>
        <dbReference type="EC" id="2.7.11.1"/>
    </reaction>
</comment>
<comment type="catalytic activity">
    <reaction>
        <text>L-threonyl-[protein] + ATP = O-phospho-L-threonyl-[protein] + ADP + H(+)</text>
        <dbReference type="Rhea" id="RHEA:46608"/>
        <dbReference type="Rhea" id="RHEA-COMP:11060"/>
        <dbReference type="Rhea" id="RHEA-COMP:11605"/>
        <dbReference type="ChEBI" id="CHEBI:15378"/>
        <dbReference type="ChEBI" id="CHEBI:30013"/>
        <dbReference type="ChEBI" id="CHEBI:30616"/>
        <dbReference type="ChEBI" id="CHEBI:61977"/>
        <dbReference type="ChEBI" id="CHEBI:456216"/>
        <dbReference type="EC" id="2.7.11.1"/>
    </reaction>
</comment>
<comment type="cofactor">
    <cofactor evidence="1">
        <name>Mg(2+)</name>
        <dbReference type="ChEBI" id="CHEBI:18420"/>
    </cofactor>
</comment>
<comment type="activity regulation">
    <text evidence="5 7">Upon extracellular signal or mitogen stimulation, phosphorylated at Thr-573 in the C-terminal kinase domain (CTKD) by MAPK1/ERK2 and MAPK3/ERK1. The activated CTKD then autophosphorylates Ser-380, allowing binding of PDPK1, which in turn phosphorylates Ser-221 in the N-terminal kinase domain (NTDK) leading to the full activation of the protein and subsequent phosphorylation of the substrates by the NTKD.</text>
</comment>
<comment type="subunit">
    <text evidence="1">Forms a complex with either MAPK1/ERK2 or MAPK3/ERK1 in quiescent cells. Transiently dissociates following mitogenic stimulation. Interacts with ETV1/ER81 and FGFR1 (By similarity).</text>
</comment>
<comment type="subcellular location">
    <subcellularLocation>
        <location evidence="7">Nucleus</location>
    </subcellularLocation>
    <subcellularLocation>
        <location evidence="7">Cytoplasm</location>
    </subcellularLocation>
</comment>
<comment type="PTM">
    <text evidence="5">Activated by phosphorylation at Ser-221 by PDPK1. Autophosphorylated on Ser-380, as part of the activation process. May be phosphorylated at Thr-359 and Ser-363 by MAPK1/ERK2 and MAPK3/ERK1.</text>
</comment>
<comment type="PTM">
    <text evidence="1">N-terminal myristoylation results in an activated kinase in the absence of added growth factors.</text>
</comment>
<comment type="similarity">
    <text evidence="8">Belongs to the protein kinase superfamily. AGC Ser/Thr protein kinase family. S6 kinase subfamily.</text>
</comment>
<sequence length="735" mass="82883">MPLAQLKEPWPLMELVPLDPENGQASGEEAGLQPSKDEGILKEISITHHVKAGSEKADPSHFELLKVLGQGSFGKVFLVRKVTRPDNGHLYAMKVLKKATLKVRDRVRTKMERDILADVNHPFVVKLHYAFQTEGKLYLILDFLRGGDLFTRLSKEVMFTEEDVKFYLAELALGLDHLHSLGIIYRDLKPENILLDEEGHIKLTDFGLSKEAIDHEKKAYSFCGTVEYMAPEVVNRQGHTHSADWWSYGVLMFEMLTGSLPFQGKDRKETMTLILKAKLGMPQFLSTEAQSLLRALFKRNPANRLGSGPDGAEEIKRHIFYSTIDWNKLYRREIKPPFKPAVAQPDDTFYFDTEFTSRTPRDSPGIPPSAGAHQLFRGFSFVATGLMEDDSKPRATQAPLHSVVQQLHGKNLVFSDGYIVKETIGVGSYSVCKRCVHKATNMEYAVKVIDKSKRDPSEEIEILLRYGQHPNIITLKDVYDDSKHVYLVTELMRGGELLDKILRQKFFSEREASFVLYTISKTVEYLHSQGVVHRDLKPSNILYVDESGNPECLRICDFGFAKQLRAENGLLMTPCYTANFVAPEVLKRQGYDEGCDIWSLGVLLYTMLAGYTPFANGPSDTPEEILTRISSGKFTLSGGNWNTVSETAKDLVSKMLHVDPHQRLTAKQVLQHPWITQKDKLPQSQLSHQDLQLVKGGMAATYSALSSSKPTPQLKPIESSILAQRRVRKLPSTTL</sequence>
<organism>
    <name type="scientific">Rattus norvegicus</name>
    <name type="common">Rat</name>
    <dbReference type="NCBI Taxonomy" id="10116"/>
    <lineage>
        <taxon>Eukaryota</taxon>
        <taxon>Metazoa</taxon>
        <taxon>Chordata</taxon>
        <taxon>Craniata</taxon>
        <taxon>Vertebrata</taxon>
        <taxon>Euteleostomi</taxon>
        <taxon>Mammalia</taxon>
        <taxon>Eutheria</taxon>
        <taxon>Euarchontoglires</taxon>
        <taxon>Glires</taxon>
        <taxon>Rodentia</taxon>
        <taxon>Myomorpha</taxon>
        <taxon>Muroidea</taxon>
        <taxon>Muridae</taxon>
        <taxon>Murinae</taxon>
        <taxon>Rattus</taxon>
    </lineage>
</organism>
<gene>
    <name type="primary">Rps6ka1</name>
    <name type="synonym">Mapkapk1a</name>
    <name type="synonym">Rsk1</name>
</gene>
<feature type="chain" id="PRO_0000086200" description="Ribosomal protein S6 kinase alpha-1">
    <location>
        <begin position="1"/>
        <end position="735"/>
    </location>
</feature>
<feature type="domain" description="Protein kinase 1" evidence="3">
    <location>
        <begin position="62"/>
        <end position="321"/>
    </location>
</feature>
<feature type="domain" description="AGC-kinase C-terminal" evidence="4">
    <location>
        <begin position="322"/>
        <end position="391"/>
    </location>
</feature>
<feature type="domain" description="Protein kinase 2" evidence="3">
    <location>
        <begin position="418"/>
        <end position="675"/>
    </location>
</feature>
<feature type="active site" description="Proton acceptor" evidence="1">
    <location>
        <position position="187"/>
    </location>
</feature>
<feature type="active site" description="Proton acceptor" evidence="1">
    <location>
        <position position="535"/>
    </location>
</feature>
<feature type="binding site" evidence="3">
    <location>
        <begin position="68"/>
        <end position="76"/>
    </location>
    <ligand>
        <name>ATP</name>
        <dbReference type="ChEBI" id="CHEBI:30616"/>
    </ligand>
</feature>
<feature type="binding site" evidence="3">
    <location>
        <position position="94"/>
    </location>
    <ligand>
        <name>ATP</name>
        <dbReference type="ChEBI" id="CHEBI:30616"/>
    </ligand>
</feature>
<feature type="binding site" evidence="3">
    <location>
        <begin position="424"/>
        <end position="432"/>
    </location>
    <ligand>
        <name>ATP</name>
        <dbReference type="ChEBI" id="CHEBI:30616"/>
    </ligand>
</feature>
<feature type="binding site" evidence="3">
    <location>
        <position position="447"/>
    </location>
    <ligand>
        <name>ATP</name>
        <dbReference type="ChEBI" id="CHEBI:30616"/>
    </ligand>
</feature>
<feature type="modified residue" description="Phosphoserine" evidence="2">
    <location>
        <position position="54"/>
    </location>
</feature>
<feature type="modified residue" description="Phosphoserine; by PDPK1" evidence="5">
    <location>
        <position position="221"/>
    </location>
</feature>
<feature type="modified residue" description="Phosphoserine" evidence="2">
    <location>
        <position position="307"/>
    </location>
</feature>
<feature type="modified residue" description="Phosphothreonine" evidence="2">
    <location>
        <position position="359"/>
    </location>
</feature>
<feature type="modified residue" description="Phosphoserine" evidence="2">
    <location>
        <position position="363"/>
    </location>
</feature>
<feature type="modified residue" description="Phosphoserine; by autocatalysis" evidence="2">
    <location>
        <position position="369"/>
    </location>
</feature>
<feature type="modified residue" description="Phosphoserine; by autocatalysis" evidence="2">
    <location>
        <position position="380"/>
    </location>
</feature>
<feature type="modified residue" description="Phosphothreonine" evidence="2">
    <location>
        <position position="573"/>
    </location>
</feature>
<feature type="modified residue" description="Phosphoserine" evidence="2">
    <location>
        <position position="732"/>
    </location>
</feature>
<reference key="1">
    <citation type="journal article" date="1993" name="Biochemistry">
        <title>Regulation of an epitope-tagged recombinant Rsk-1 S6 kinase by phorbol ester and erk/MAP kinase.</title>
        <authorList>
            <person name="Grove J.R."/>
            <person name="Price D.J."/>
            <person name="Banerjee P."/>
            <person name="Balasubramanyam A."/>
            <person name="Ahmad M.F."/>
            <person name="Avruch J."/>
        </authorList>
    </citation>
    <scope>NUCLEOTIDE SEQUENCE [MRNA]</scope>
</reference>
<reference key="2">
    <citation type="journal article" date="1999" name="J. Biol. Chem.">
        <title>90-kDa ribosomal S6 kinase is phosphorylated and activated by 3-phosphoinositide-dependent protein kinase-1.</title>
        <authorList>
            <person name="Jensen C.J."/>
            <person name="Buch M.-B."/>
            <person name="Krag T.O."/>
            <person name="Hemmings B.A."/>
            <person name="Gammeltoft S."/>
            <person name="Froedin M."/>
        </authorList>
    </citation>
    <scope>ACTIVITY REGULATION</scope>
    <scope>PHOSPHORYLATION AT SER-221</scope>
</reference>
<reference key="3">
    <citation type="journal article" date="2003" name="J. Biol. Chem.">
        <title>Phosphorylation of p27Kip1 at threonine 198 by p90 ribosomal protein S6 kinases promotes its binding to 14-3-3 and cytoplasmic localization.</title>
        <authorList>
            <person name="Fujita N."/>
            <person name="Sato S."/>
            <person name="Tsuruo T."/>
        </authorList>
    </citation>
    <scope>FUNCTION IN CELL CYCLE REGULATION</scope>
    <scope>FUNCTION IN PHOSPHORYLATION OF CDKN1B</scope>
</reference>
<reference key="4">
    <citation type="journal article" date="2004" name="J. Biol. Chem.">
        <title>90-kDa ribosomal S6 kinase is a direct target for the nuclear fibroblast growth factor receptor 1 (FGFR1): role in FGFR1 signaling.</title>
        <authorList>
            <person name="Hu Y."/>
            <person name="Fang X."/>
            <person name="Dunham S.M."/>
            <person name="Prada C."/>
            <person name="Stachowiak E.K."/>
            <person name="Stachowiak M.K."/>
        </authorList>
    </citation>
    <scope>FUNCTION</scope>
    <scope>INTERACTION WITH FGFR1</scope>
    <scope>ACTIVITY REGULATION</scope>
    <scope>SUBCELLULAR LOCATION</scope>
</reference>
<name>KS6A1_RAT</name>
<proteinExistence type="evidence at protein level"/>
<dbReference type="EC" id="2.7.11.1"/>
<dbReference type="EMBL" id="M99169">
    <property type="protein sequence ID" value="AAA02872.1"/>
    <property type="molecule type" value="mRNA"/>
</dbReference>
<dbReference type="PIR" id="A53300">
    <property type="entry name" value="A53300"/>
</dbReference>
<dbReference type="RefSeq" id="NP_112369.1">
    <property type="nucleotide sequence ID" value="NM_031107.1"/>
</dbReference>
<dbReference type="SMR" id="Q63531"/>
<dbReference type="BioGRID" id="249643">
    <property type="interactions" value="6"/>
</dbReference>
<dbReference type="FunCoup" id="Q63531">
    <property type="interactions" value="1788"/>
</dbReference>
<dbReference type="IntAct" id="Q63531">
    <property type="interactions" value="1"/>
</dbReference>
<dbReference type="MINT" id="Q63531"/>
<dbReference type="STRING" id="10116.ENSRNOP00000070880"/>
<dbReference type="BindingDB" id="Q63531"/>
<dbReference type="ChEMBL" id="CHEMBL5528"/>
<dbReference type="iPTMnet" id="Q63531"/>
<dbReference type="PhosphoSitePlus" id="Q63531"/>
<dbReference type="jPOST" id="Q63531"/>
<dbReference type="PaxDb" id="10116-ENSRNOP00000060054"/>
<dbReference type="GeneID" id="81771"/>
<dbReference type="KEGG" id="rno:81771"/>
<dbReference type="UCSC" id="RGD:620675">
    <property type="organism name" value="rat"/>
</dbReference>
<dbReference type="AGR" id="RGD:620675"/>
<dbReference type="CTD" id="6195"/>
<dbReference type="RGD" id="620675">
    <property type="gene designation" value="Rps6ka1"/>
</dbReference>
<dbReference type="eggNOG" id="KOG0603">
    <property type="taxonomic scope" value="Eukaryota"/>
</dbReference>
<dbReference type="InParanoid" id="Q63531"/>
<dbReference type="OrthoDB" id="63267at2759"/>
<dbReference type="PhylomeDB" id="Q63531"/>
<dbReference type="BRENDA" id="2.7.11.1">
    <property type="organism ID" value="5301"/>
</dbReference>
<dbReference type="Reactome" id="R-RNO-198753">
    <property type="pathway name" value="ERK/MAPK targets"/>
</dbReference>
<dbReference type="Reactome" id="R-RNO-199920">
    <property type="pathway name" value="CREB phosphorylation"/>
</dbReference>
<dbReference type="Reactome" id="R-RNO-2559582">
    <property type="pathway name" value="Senescence-Associated Secretory Phenotype (SASP)"/>
</dbReference>
<dbReference type="Reactome" id="R-RNO-442742">
    <property type="pathway name" value="CREB1 phosphorylation through NMDA receptor-mediated activation of RAS signaling"/>
</dbReference>
<dbReference type="Reactome" id="R-RNO-444257">
    <property type="pathway name" value="RSK activation"/>
</dbReference>
<dbReference type="Reactome" id="R-RNO-881907">
    <property type="pathway name" value="Gastrin-CREB signalling pathway via PKC and MAPK"/>
</dbReference>
<dbReference type="Reactome" id="R-RNO-9856649">
    <property type="pathway name" value="Transcriptional and post-translational regulation of MITF-M expression and activity"/>
</dbReference>
<dbReference type="CD-CODE" id="B2E8AD81">
    <property type="entry name" value="Stress granule"/>
</dbReference>
<dbReference type="PRO" id="PR:Q63531"/>
<dbReference type="Proteomes" id="UP000002494">
    <property type="component" value="Unplaced"/>
</dbReference>
<dbReference type="GO" id="GO:0005737">
    <property type="term" value="C:cytoplasm"/>
    <property type="evidence" value="ECO:0000318"/>
    <property type="project" value="GO_Central"/>
</dbReference>
<dbReference type="GO" id="GO:0005829">
    <property type="term" value="C:cytosol"/>
    <property type="evidence" value="ECO:0000304"/>
    <property type="project" value="Reactome"/>
</dbReference>
<dbReference type="GO" id="GO:0098978">
    <property type="term" value="C:glutamatergic synapse"/>
    <property type="evidence" value="ECO:0000314"/>
    <property type="project" value="SynGO"/>
</dbReference>
<dbReference type="GO" id="GO:0005654">
    <property type="term" value="C:nucleoplasm"/>
    <property type="evidence" value="ECO:0000318"/>
    <property type="project" value="GO_Central"/>
</dbReference>
<dbReference type="GO" id="GO:0014069">
    <property type="term" value="C:postsynaptic density"/>
    <property type="evidence" value="ECO:0000314"/>
    <property type="project" value="SynGO"/>
</dbReference>
<dbReference type="GO" id="GO:0005819">
    <property type="term" value="C:spindle"/>
    <property type="evidence" value="ECO:0000266"/>
    <property type="project" value="RGD"/>
</dbReference>
<dbReference type="GO" id="GO:0045202">
    <property type="term" value="C:synapse"/>
    <property type="evidence" value="ECO:0000266"/>
    <property type="project" value="RGD"/>
</dbReference>
<dbReference type="GO" id="GO:0005524">
    <property type="term" value="F:ATP binding"/>
    <property type="evidence" value="ECO:0007669"/>
    <property type="project" value="UniProtKB-KW"/>
</dbReference>
<dbReference type="GO" id="GO:0140297">
    <property type="term" value="F:DNA-binding transcription factor binding"/>
    <property type="evidence" value="ECO:0000266"/>
    <property type="project" value="RGD"/>
</dbReference>
<dbReference type="GO" id="GO:0016301">
    <property type="term" value="F:kinase activity"/>
    <property type="evidence" value="ECO:0000250"/>
    <property type="project" value="UniProtKB"/>
</dbReference>
<dbReference type="GO" id="GO:0000287">
    <property type="term" value="F:magnesium ion binding"/>
    <property type="evidence" value="ECO:0007669"/>
    <property type="project" value="InterPro"/>
</dbReference>
<dbReference type="GO" id="GO:0106310">
    <property type="term" value="F:protein serine kinase activity"/>
    <property type="evidence" value="ECO:0007669"/>
    <property type="project" value="RHEA"/>
</dbReference>
<dbReference type="GO" id="GO:0004674">
    <property type="term" value="F:protein serine/threonine kinase activity"/>
    <property type="evidence" value="ECO:0000250"/>
    <property type="project" value="UniProtKB"/>
</dbReference>
<dbReference type="GO" id="GO:0004712">
    <property type="term" value="F:protein serine/threonine/tyrosine kinase activity"/>
    <property type="evidence" value="ECO:0000266"/>
    <property type="project" value="RGD"/>
</dbReference>
<dbReference type="GO" id="GO:0004711">
    <property type="term" value="F:ribosomal protein S6 kinase activity"/>
    <property type="evidence" value="ECO:0000318"/>
    <property type="project" value="GO_Central"/>
</dbReference>
<dbReference type="GO" id="GO:0072574">
    <property type="term" value="P:hepatocyte proliferation"/>
    <property type="evidence" value="ECO:0000250"/>
    <property type="project" value="UniProtKB"/>
</dbReference>
<dbReference type="GO" id="GO:0043066">
    <property type="term" value="P:negative regulation of apoptotic process"/>
    <property type="evidence" value="ECO:0000250"/>
    <property type="project" value="UniProtKB"/>
</dbReference>
<dbReference type="GO" id="GO:0032007">
    <property type="term" value="P:negative regulation of TOR signaling"/>
    <property type="evidence" value="ECO:0000266"/>
    <property type="project" value="RGD"/>
</dbReference>
<dbReference type="GO" id="GO:0045893">
    <property type="term" value="P:positive regulation of DNA-templated transcription"/>
    <property type="evidence" value="ECO:0000314"/>
    <property type="project" value="RGD"/>
</dbReference>
<dbReference type="GO" id="GO:2000491">
    <property type="term" value="P:positive regulation of hepatic stellate cell activation"/>
    <property type="evidence" value="ECO:0000250"/>
    <property type="project" value="UniProtKB"/>
</dbReference>
<dbReference type="GO" id="GO:0045944">
    <property type="term" value="P:positive regulation of transcription by RNA polymerase II"/>
    <property type="evidence" value="ECO:0000266"/>
    <property type="project" value="RGD"/>
</dbReference>
<dbReference type="GO" id="GO:0038202">
    <property type="term" value="P:TORC1 signaling"/>
    <property type="evidence" value="ECO:0000318"/>
    <property type="project" value="GO_Central"/>
</dbReference>
<dbReference type="CDD" id="cd14175">
    <property type="entry name" value="STKc_RSK1_C"/>
    <property type="match status" value="1"/>
</dbReference>
<dbReference type="CDD" id="cd05582">
    <property type="entry name" value="STKc_RSK_N"/>
    <property type="match status" value="1"/>
</dbReference>
<dbReference type="FunFam" id="1.10.510.10:FF:000010">
    <property type="entry name" value="Ribosomal protein S6 kinase"/>
    <property type="match status" value="1"/>
</dbReference>
<dbReference type="FunFam" id="1.10.510.10:FF:000041">
    <property type="entry name" value="Ribosomal protein S6 kinase"/>
    <property type="match status" value="1"/>
</dbReference>
<dbReference type="FunFam" id="3.30.200.20:FF:000013">
    <property type="entry name" value="Ribosomal protein S6 kinase"/>
    <property type="match status" value="1"/>
</dbReference>
<dbReference type="FunFam" id="3.30.200.20:FF:000121">
    <property type="entry name" value="Ribosomal protein S6 kinase"/>
    <property type="match status" value="1"/>
</dbReference>
<dbReference type="Gene3D" id="3.30.200.20">
    <property type="entry name" value="Phosphorylase Kinase, domain 1"/>
    <property type="match status" value="2"/>
</dbReference>
<dbReference type="Gene3D" id="1.10.510.10">
    <property type="entry name" value="Transferase(Phosphotransferase) domain 1"/>
    <property type="match status" value="2"/>
</dbReference>
<dbReference type="InterPro" id="IPR000961">
    <property type="entry name" value="AGC-kinase_C"/>
</dbReference>
<dbReference type="InterPro" id="IPR011009">
    <property type="entry name" value="Kinase-like_dom_sf"/>
</dbReference>
<dbReference type="InterPro" id="IPR017892">
    <property type="entry name" value="Pkinase_C"/>
</dbReference>
<dbReference type="InterPro" id="IPR000719">
    <property type="entry name" value="Prot_kinase_dom"/>
</dbReference>
<dbReference type="InterPro" id="IPR017441">
    <property type="entry name" value="Protein_kinase_ATP_BS"/>
</dbReference>
<dbReference type="InterPro" id="IPR016239">
    <property type="entry name" value="Ribosomal_S6_kinase_II"/>
</dbReference>
<dbReference type="InterPro" id="IPR041906">
    <property type="entry name" value="RSK_N"/>
</dbReference>
<dbReference type="InterPro" id="IPR008271">
    <property type="entry name" value="Ser/Thr_kinase_AS"/>
</dbReference>
<dbReference type="PANTHER" id="PTHR24351">
    <property type="entry name" value="RIBOSOMAL PROTEIN S6 KINASE"/>
    <property type="match status" value="1"/>
</dbReference>
<dbReference type="Pfam" id="PF00069">
    <property type="entry name" value="Pkinase"/>
    <property type="match status" value="2"/>
</dbReference>
<dbReference type="Pfam" id="PF00433">
    <property type="entry name" value="Pkinase_C"/>
    <property type="match status" value="1"/>
</dbReference>
<dbReference type="PIRSF" id="PIRSF000606">
    <property type="entry name" value="Ribsml_S6_kin_2"/>
    <property type="match status" value="1"/>
</dbReference>
<dbReference type="SMART" id="SM00133">
    <property type="entry name" value="S_TK_X"/>
    <property type="match status" value="1"/>
</dbReference>
<dbReference type="SMART" id="SM00220">
    <property type="entry name" value="S_TKc"/>
    <property type="match status" value="2"/>
</dbReference>
<dbReference type="SUPFAM" id="SSF56112">
    <property type="entry name" value="Protein kinase-like (PK-like)"/>
    <property type="match status" value="2"/>
</dbReference>
<dbReference type="PROSITE" id="PS51285">
    <property type="entry name" value="AGC_KINASE_CTER"/>
    <property type="match status" value="1"/>
</dbReference>
<dbReference type="PROSITE" id="PS00107">
    <property type="entry name" value="PROTEIN_KINASE_ATP"/>
    <property type="match status" value="2"/>
</dbReference>
<dbReference type="PROSITE" id="PS50011">
    <property type="entry name" value="PROTEIN_KINASE_DOM"/>
    <property type="match status" value="2"/>
</dbReference>
<dbReference type="PROSITE" id="PS00108">
    <property type="entry name" value="PROTEIN_KINASE_ST"/>
    <property type="match status" value="2"/>
</dbReference>